<comment type="similarity">
    <text evidence="2">Belongs to the bacterial ribosomal protein bL32 family.</text>
</comment>
<organism>
    <name type="scientific">Vibrio vulnificus (strain YJ016)</name>
    <dbReference type="NCBI Taxonomy" id="196600"/>
    <lineage>
        <taxon>Bacteria</taxon>
        <taxon>Pseudomonadati</taxon>
        <taxon>Pseudomonadota</taxon>
        <taxon>Gammaproteobacteria</taxon>
        <taxon>Vibrionales</taxon>
        <taxon>Vibrionaceae</taxon>
        <taxon>Vibrio</taxon>
    </lineage>
</organism>
<name>RL32_VIBVY</name>
<gene>
    <name evidence="2" type="primary">rpmF</name>
    <name type="ordered locus">VV1271</name>
</gene>
<reference key="1">
    <citation type="journal article" date="2003" name="Genome Res.">
        <title>Comparative genome analysis of Vibrio vulnificus, a marine pathogen.</title>
        <authorList>
            <person name="Chen C.-Y."/>
            <person name="Wu K.-M."/>
            <person name="Chang Y.-C."/>
            <person name="Chang C.-H."/>
            <person name="Tsai H.-C."/>
            <person name="Liao T.-L."/>
            <person name="Liu Y.-M."/>
            <person name="Chen H.-J."/>
            <person name="Shen A.B.-T."/>
            <person name="Li J.-C."/>
            <person name="Su T.-L."/>
            <person name="Shao C.-P."/>
            <person name="Lee C.-T."/>
            <person name="Hor L.-I."/>
            <person name="Tsai S.-F."/>
        </authorList>
    </citation>
    <scope>NUCLEOTIDE SEQUENCE [LARGE SCALE GENOMIC DNA]</scope>
    <source>
        <strain>YJ016</strain>
    </source>
</reference>
<accession>Q7MM02</accession>
<protein>
    <recommendedName>
        <fullName evidence="2">Large ribosomal subunit protein bL32</fullName>
    </recommendedName>
    <alternativeName>
        <fullName evidence="4">50S ribosomal protein L32</fullName>
    </alternativeName>
</protein>
<proteinExistence type="inferred from homology"/>
<feature type="initiator methionine" description="Removed" evidence="1">
    <location>
        <position position="1"/>
    </location>
</feature>
<feature type="chain" id="PRO_0000172437" description="Large ribosomal subunit protein bL32">
    <location>
        <begin position="2"/>
        <end position="56"/>
    </location>
</feature>
<feature type="region of interest" description="Disordered" evidence="3">
    <location>
        <begin position="1"/>
        <end position="28"/>
    </location>
</feature>
<feature type="compositionally biased region" description="Basic residues" evidence="3">
    <location>
        <begin position="7"/>
        <end position="16"/>
    </location>
</feature>
<sequence>MAVQQNRKTRSKRGMRRSHDALTTAALSVDATSGETHLRHNVTAEGYYRGKKVINK</sequence>
<evidence type="ECO:0000250" key="1"/>
<evidence type="ECO:0000255" key="2">
    <source>
        <dbReference type="HAMAP-Rule" id="MF_00340"/>
    </source>
</evidence>
<evidence type="ECO:0000256" key="3">
    <source>
        <dbReference type="SAM" id="MobiDB-lite"/>
    </source>
</evidence>
<evidence type="ECO:0000305" key="4"/>
<keyword id="KW-0687">Ribonucleoprotein</keyword>
<keyword id="KW-0689">Ribosomal protein</keyword>
<dbReference type="EMBL" id="BA000037">
    <property type="protein sequence ID" value="BAC94035.1"/>
    <property type="molecule type" value="Genomic_DNA"/>
</dbReference>
<dbReference type="RefSeq" id="WP_011080823.1">
    <property type="nucleotide sequence ID" value="NC_005139.1"/>
</dbReference>
<dbReference type="SMR" id="Q7MM02"/>
<dbReference type="STRING" id="672.VV93_v1c11880"/>
<dbReference type="GeneID" id="93894223"/>
<dbReference type="KEGG" id="vvy:VV1271"/>
<dbReference type="eggNOG" id="COG0333">
    <property type="taxonomic scope" value="Bacteria"/>
</dbReference>
<dbReference type="HOGENOM" id="CLU_129084_2_1_6"/>
<dbReference type="Proteomes" id="UP000002675">
    <property type="component" value="Chromosome I"/>
</dbReference>
<dbReference type="GO" id="GO:0015934">
    <property type="term" value="C:large ribosomal subunit"/>
    <property type="evidence" value="ECO:0007669"/>
    <property type="project" value="InterPro"/>
</dbReference>
<dbReference type="GO" id="GO:0003735">
    <property type="term" value="F:structural constituent of ribosome"/>
    <property type="evidence" value="ECO:0007669"/>
    <property type="project" value="InterPro"/>
</dbReference>
<dbReference type="GO" id="GO:0006412">
    <property type="term" value="P:translation"/>
    <property type="evidence" value="ECO:0007669"/>
    <property type="project" value="UniProtKB-UniRule"/>
</dbReference>
<dbReference type="HAMAP" id="MF_00340">
    <property type="entry name" value="Ribosomal_bL32"/>
    <property type="match status" value="1"/>
</dbReference>
<dbReference type="InterPro" id="IPR002677">
    <property type="entry name" value="Ribosomal_bL32"/>
</dbReference>
<dbReference type="InterPro" id="IPR044957">
    <property type="entry name" value="Ribosomal_bL32_bact"/>
</dbReference>
<dbReference type="InterPro" id="IPR011332">
    <property type="entry name" value="Ribosomal_zn-bd"/>
</dbReference>
<dbReference type="NCBIfam" id="TIGR01031">
    <property type="entry name" value="rpmF_bact"/>
    <property type="match status" value="1"/>
</dbReference>
<dbReference type="PANTHER" id="PTHR35534">
    <property type="entry name" value="50S RIBOSOMAL PROTEIN L32"/>
    <property type="match status" value="1"/>
</dbReference>
<dbReference type="PANTHER" id="PTHR35534:SF1">
    <property type="entry name" value="LARGE RIBOSOMAL SUBUNIT PROTEIN BL32"/>
    <property type="match status" value="1"/>
</dbReference>
<dbReference type="Pfam" id="PF01783">
    <property type="entry name" value="Ribosomal_L32p"/>
    <property type="match status" value="1"/>
</dbReference>
<dbReference type="SUPFAM" id="SSF57829">
    <property type="entry name" value="Zn-binding ribosomal proteins"/>
    <property type="match status" value="1"/>
</dbReference>